<comment type="function">
    <text evidence="2 4 5 6">Transfers a succinyl group from succinyl-CoA to L-homoserine, forming succinyl-L-homoserine (PubMed:10572016, PubMed:17302437, PubMed:17442255, PubMed:28581482). Utilizes a ping-pong kinetic mechanism in which the succinyl group of succinyl-CoA is initially transferred to the enzyme to form a succinyl-enzyme intermediate before subsequent transfer to homoserine to form the final product, O-succinylhomoserine (PubMed:10572016, PubMed:17302437, PubMed:17442255). Cannot use acetyl-CoA (PubMed:10572016).</text>
</comment>
<comment type="catalytic activity">
    <reaction evidence="1 2 4 5 6">
        <text>L-homoserine + succinyl-CoA = O-succinyl-L-homoserine + CoA</text>
        <dbReference type="Rhea" id="RHEA:22008"/>
        <dbReference type="ChEBI" id="CHEBI:57287"/>
        <dbReference type="ChEBI" id="CHEBI:57292"/>
        <dbReference type="ChEBI" id="CHEBI:57476"/>
        <dbReference type="ChEBI" id="CHEBI:57661"/>
        <dbReference type="EC" id="2.3.1.46"/>
    </reaction>
</comment>
<comment type="activity regulation">
    <text evidence="2">Inhibited by iodoacetamide in a pH-dependent manner.</text>
</comment>
<comment type="biophysicochemical properties">
    <kinetics>
        <KM evidence="2">0.17 mM for succinyl-CoA</KM>
        <KM evidence="4">0.13 mM for succinyl-CoA</KM>
        <KM evidence="5">0.28 mM for succinyl-CoA</KM>
        <KM evidence="2">1.6 mM for L-homoserine</KM>
        <KM evidence="4">0.72 mM for L-homoserine</KM>
        <KM evidence="5">0.38 mM for L-homoserine</KM>
        <KM evidence="2">0.64 mM for CoA</KM>
        <KM evidence="2">3.5 mM for O-succinylhomoserine</KM>
        <text evidence="2">kcat is 24 sec(-1) with succinyl-CoA as substrate. kcat is 24 sec(-1) with L-homoserine as substrate. kcat is 5.23 sec(-1) with CoA as substrate. kcat is 5.23 sec(-1) with O-succinylhomoserine as substrate.</text>
    </kinetics>
</comment>
<comment type="pathway">
    <text evidence="1 13">Amino-acid biosynthesis; L-methionine biosynthesis via de novo pathway; O-succinyl-L-homoserine from L-homoserine: step 1/1.</text>
</comment>
<comment type="subunit">
    <text evidence="1 2">Homodimer.</text>
</comment>
<comment type="subcellular location">
    <subcellularLocation>
        <location evidence="1 12">Cytoplasm</location>
    </subcellularLocation>
</comment>
<comment type="induction">
    <text evidence="7">Contains two transcription starting points, P1 and P2, which are 74 bp apart. P1 is under negative control by methionine, whereas P2 is independent of the intracellular methionine concentration.</text>
</comment>
<comment type="similarity">
    <text evidence="1 12">Belongs to the MetA family.</text>
</comment>
<name>METAS_ECOLI</name>
<dbReference type="EC" id="2.3.1.46" evidence="2 4 5 6"/>
<dbReference type="EMBL" id="X14501">
    <property type="protein sequence ID" value="CAA32654.1"/>
    <property type="molecule type" value="Genomic_DNA"/>
</dbReference>
<dbReference type="EMBL" id="U00006">
    <property type="protein sequence ID" value="AAC43107.1"/>
    <property type="molecule type" value="Genomic_DNA"/>
</dbReference>
<dbReference type="EMBL" id="U00096">
    <property type="protein sequence ID" value="AAC76983.1"/>
    <property type="molecule type" value="Genomic_DNA"/>
</dbReference>
<dbReference type="EMBL" id="AP009048">
    <property type="protein sequence ID" value="BAE78015.1"/>
    <property type="molecule type" value="Genomic_DNA"/>
</dbReference>
<dbReference type="EMBL" id="M10210">
    <property type="protein sequence ID" value="AAA24157.1"/>
    <property type="molecule type" value="Genomic_DNA"/>
</dbReference>
<dbReference type="EMBL" id="X12431">
    <property type="status" value="NOT_ANNOTATED_CDS"/>
    <property type="molecule type" value="Genomic_DNA"/>
</dbReference>
<dbReference type="PIR" id="D65208">
    <property type="entry name" value="XYECM"/>
</dbReference>
<dbReference type="RefSeq" id="NP_418437.1">
    <property type="nucleotide sequence ID" value="NC_000913.3"/>
</dbReference>
<dbReference type="RefSeq" id="WP_001122779.1">
    <property type="nucleotide sequence ID" value="NZ_LN832404.1"/>
</dbReference>
<dbReference type="PDB" id="6MTG">
    <property type="method" value="X-ray"/>
    <property type="resolution" value="1.85 A"/>
    <property type="chains" value="A/B=1-296"/>
</dbReference>
<dbReference type="PDB" id="7CBE">
    <property type="method" value="X-ray"/>
    <property type="resolution" value="1.70 A"/>
    <property type="chains" value="A/B=1-309"/>
</dbReference>
<dbReference type="PDBsum" id="6MTG"/>
<dbReference type="PDBsum" id="7CBE"/>
<dbReference type="SMR" id="P07623"/>
<dbReference type="BioGRID" id="4259289">
    <property type="interactions" value="21"/>
</dbReference>
<dbReference type="FunCoup" id="P07623">
    <property type="interactions" value="191"/>
</dbReference>
<dbReference type="IntAct" id="P07623">
    <property type="interactions" value="2"/>
</dbReference>
<dbReference type="MINT" id="P07623"/>
<dbReference type="STRING" id="511145.b4013"/>
<dbReference type="PaxDb" id="511145-b4013"/>
<dbReference type="EnsemblBacteria" id="AAC76983">
    <property type="protein sequence ID" value="AAC76983"/>
    <property type="gene ID" value="b4013"/>
</dbReference>
<dbReference type="GeneID" id="948513"/>
<dbReference type="KEGG" id="ecj:JW3973"/>
<dbReference type="KEGG" id="eco:b4013"/>
<dbReference type="KEGG" id="ecoc:C3026_21680"/>
<dbReference type="PATRIC" id="fig|1411691.4.peg.2700"/>
<dbReference type="EchoBASE" id="EB0576"/>
<dbReference type="eggNOG" id="COG1897">
    <property type="taxonomic scope" value="Bacteria"/>
</dbReference>
<dbReference type="HOGENOM" id="CLU_057851_0_1_6"/>
<dbReference type="InParanoid" id="P07623"/>
<dbReference type="OMA" id="CSCLATH"/>
<dbReference type="OrthoDB" id="9772423at2"/>
<dbReference type="PhylomeDB" id="P07623"/>
<dbReference type="BioCyc" id="EcoCyc:HOMSUCTRAN-MONOMER"/>
<dbReference type="BioCyc" id="MetaCyc:HOMSUCTRAN-MONOMER"/>
<dbReference type="BRENDA" id="2.3.1.46">
    <property type="organism ID" value="2026"/>
</dbReference>
<dbReference type="SABIO-RK" id="P07623"/>
<dbReference type="UniPathway" id="UPA00051">
    <property type="reaction ID" value="UER00075"/>
</dbReference>
<dbReference type="PRO" id="PR:P07623"/>
<dbReference type="Proteomes" id="UP000000625">
    <property type="component" value="Chromosome"/>
</dbReference>
<dbReference type="GO" id="GO:0005737">
    <property type="term" value="C:cytoplasm"/>
    <property type="evidence" value="ECO:0007669"/>
    <property type="project" value="UniProtKB-SubCell"/>
</dbReference>
<dbReference type="GO" id="GO:0004414">
    <property type="term" value="F:homoserine O-acetyltransferase activity"/>
    <property type="evidence" value="ECO:0007669"/>
    <property type="project" value="UniProtKB-UniRule"/>
</dbReference>
<dbReference type="GO" id="GO:0008899">
    <property type="term" value="F:homoserine O-succinyltransferase activity"/>
    <property type="evidence" value="ECO:0000314"/>
    <property type="project" value="EcoCyc"/>
</dbReference>
<dbReference type="GO" id="GO:0042803">
    <property type="term" value="F:protein homodimerization activity"/>
    <property type="evidence" value="ECO:0000314"/>
    <property type="project" value="EcoCyc"/>
</dbReference>
<dbReference type="GO" id="GO:0019281">
    <property type="term" value="P:L-methionine biosynthetic process from homoserine via O-succinyl-L-homoserine and cystathionine"/>
    <property type="evidence" value="ECO:0007669"/>
    <property type="project" value="InterPro"/>
</dbReference>
<dbReference type="CDD" id="cd03131">
    <property type="entry name" value="GATase1_HTS"/>
    <property type="match status" value="1"/>
</dbReference>
<dbReference type="FunFam" id="3.40.50.880:FF:000004">
    <property type="entry name" value="Homoserine O-succinyltransferase"/>
    <property type="match status" value="1"/>
</dbReference>
<dbReference type="Gene3D" id="3.40.50.880">
    <property type="match status" value="1"/>
</dbReference>
<dbReference type="HAMAP" id="MF_00295">
    <property type="entry name" value="MetA_acyltransf"/>
    <property type="match status" value="1"/>
</dbReference>
<dbReference type="InterPro" id="IPR029062">
    <property type="entry name" value="Class_I_gatase-like"/>
</dbReference>
<dbReference type="InterPro" id="IPR005697">
    <property type="entry name" value="HST_MetA"/>
</dbReference>
<dbReference type="InterPro" id="IPR033752">
    <property type="entry name" value="MetA_family"/>
</dbReference>
<dbReference type="NCBIfam" id="TIGR01001">
    <property type="entry name" value="metA"/>
    <property type="match status" value="1"/>
</dbReference>
<dbReference type="PANTHER" id="PTHR20919">
    <property type="entry name" value="HOMOSERINE O-SUCCINYLTRANSFERASE"/>
    <property type="match status" value="1"/>
</dbReference>
<dbReference type="PANTHER" id="PTHR20919:SF0">
    <property type="entry name" value="HOMOSERINE O-SUCCINYLTRANSFERASE"/>
    <property type="match status" value="1"/>
</dbReference>
<dbReference type="Pfam" id="PF04204">
    <property type="entry name" value="HTS"/>
    <property type="match status" value="1"/>
</dbReference>
<dbReference type="PIRSF" id="PIRSF000450">
    <property type="entry name" value="H_ser_succinyltr"/>
    <property type="match status" value="1"/>
</dbReference>
<dbReference type="SUPFAM" id="SSF52317">
    <property type="entry name" value="Class I glutamine amidotransferase-like"/>
    <property type="match status" value="1"/>
</dbReference>
<feature type="initiator methionine" description="Removed" evidence="2">
    <location>
        <position position="1"/>
    </location>
</feature>
<feature type="chain" id="PRO_0000199748" description="Homoserine O-succinyltransferase">
    <location>
        <begin position="2"/>
        <end position="309"/>
    </location>
</feature>
<feature type="active site" description="Acyl-thioester intermediate" evidence="1 13 14 15">
    <location>
        <position position="142"/>
    </location>
</feature>
<feature type="active site" description="Proton acceptor" evidence="1 14 15">
    <location>
        <position position="235"/>
    </location>
</feature>
<feature type="active site" evidence="1 14 15">
    <location>
        <position position="237"/>
    </location>
</feature>
<feature type="binding site" evidence="1">
    <location>
        <position position="163"/>
    </location>
    <ligand>
        <name>substrate</name>
    </ligand>
</feature>
<feature type="binding site" evidence="1">
    <location>
        <position position="192"/>
    </location>
    <ligand>
        <name>substrate</name>
    </ligand>
</feature>
<feature type="binding site" evidence="1">
    <location>
        <position position="249"/>
    </location>
    <ligand>
        <name>substrate</name>
    </ligand>
</feature>
<feature type="site" description="Important for acyl-CoA specificity" evidence="1">
    <location>
        <position position="111"/>
    </location>
</feature>
<feature type="site" description="Important for substrate specificity" evidence="1">
    <location>
        <position position="192"/>
    </location>
</feature>
<feature type="mutagenesis site" description="Lack of activity." evidence="3 4 5">
    <original>KK</original>
    <variation>AA</variation>
    <location>
        <begin position="46"/>
        <end position="47"/>
    </location>
</feature>
<feature type="mutagenesis site" description="16-fold decrease in Km for L-homoserine. 32-fold decrease in catalytic activity." evidence="4">
    <original>K</original>
    <variation>A</variation>
    <location>
        <position position="46"/>
    </location>
</feature>
<feature type="mutagenesis site" description="6-fold increase in Km for L-homoserine and in Km for succinyl-CoA. Slight increase in catalytic activity." evidence="5">
    <original>K</original>
    <variation>L</variation>
    <location>
        <position position="46"/>
    </location>
</feature>
<feature type="mutagenesis site" description="Slight decrease in catalytic activity." evidence="4">
    <original>K</original>
    <variation>R</variation>
    <location>
        <position position="46"/>
    </location>
</feature>
<feature type="mutagenesis site" description="22-fold decrease in Km for L-homoserine. Almost loss of catalytic activity." evidence="4">
    <original>K</original>
    <variation>A</variation>
    <location>
        <position position="47"/>
    </location>
</feature>
<feature type="mutagenesis site" description="8-fold decrease in Km for L-homoserine and 10-fold increase in Km for succinyl-CoA. 20-fold decrease in catalytic activity." evidence="5">
    <original>K</original>
    <variation>L</variation>
    <location>
        <position position="47"/>
    </location>
</feature>
<feature type="mutagenesis site" description="14-fold decrease in Km for L-homoserine. 72-fold decrease in catalytic activity." evidence="4">
    <original>K</original>
    <variation>R</variation>
    <location>
        <position position="47"/>
    </location>
</feature>
<feature type="mutagenesis site" description="No change in activity." evidence="4">
    <original>C</original>
    <variation>A</variation>
    <variation>S</variation>
    <location>
        <position position="90"/>
    </location>
</feature>
<feature type="mutagenesis site" description="Lack of activity." evidence="4 5">
    <original>C</original>
    <variation>A</variation>
    <variation>S</variation>
    <location>
        <position position="142"/>
    </location>
</feature>
<feature type="mutagenesis site" description="Lack of activity." evidence="5">
    <original>K</original>
    <variation>L</variation>
    <location>
        <position position="157"/>
    </location>
</feature>
<feature type="mutagenesis site" description="3-fold increase in Km for L-homoserine. 8-fold decrease in catalytic activity." evidence="5">
    <original>R</original>
    <variation>A</variation>
    <location>
        <position position="193"/>
    </location>
</feature>
<feature type="mutagenesis site" description="8-fold decrease in catalytic activity." evidence="5">
    <original>R</original>
    <variation>K</variation>
    <location>
        <position position="193"/>
    </location>
</feature>
<feature type="mutagenesis site" description="Lack of activity." evidence="4 5">
    <original>H</original>
    <variation>A</variation>
    <variation>N</variation>
    <location>
        <position position="235"/>
    </location>
</feature>
<feature type="mutagenesis site" description="32-fold decrease in catalytic activity." evidence="5">
    <original>E</original>
    <variation>A</variation>
    <location>
        <position position="237"/>
    </location>
</feature>
<feature type="mutagenesis site" description="3-fold decrease in catalytic activity." evidence="5">
    <original>E</original>
    <variation>D</variation>
    <location>
        <position position="237"/>
    </location>
</feature>
<feature type="mutagenesis site" description="5-fold increase in Km for L-homoserine." evidence="5">
    <original>Y</original>
    <variation>F</variation>
    <location>
        <position position="238"/>
    </location>
</feature>
<feature type="mutagenesis site" description="150-fold increase in Km for L-homoserine." evidence="5">
    <original>E</original>
    <variation>A</variation>
    <location>
        <position position="246"/>
    </location>
</feature>
<feature type="mutagenesis site" description="24-fold increase in Km for L-homoserine." evidence="5">
    <original>E</original>
    <variation>D</variation>
    <location>
        <position position="246"/>
    </location>
</feature>
<feature type="mutagenesis site" description="4-fold increase in Km for L-homoserine." evidence="5">
    <original>R</original>
    <variation>K</variation>
    <location>
        <position position="249"/>
    </location>
</feature>
<feature type="sequence conflict" description="In Ref. 1 and 6." evidence="12" ref="1 6">
    <original>I</original>
    <variation>V</variation>
    <location>
        <position position="67"/>
    </location>
</feature>
<feature type="strand" evidence="17">
    <location>
        <begin position="3"/>
        <end position="5"/>
    </location>
</feature>
<feature type="helix" evidence="17">
    <location>
        <begin position="11"/>
        <end position="17"/>
    </location>
</feature>
<feature type="strand" evidence="17">
    <location>
        <begin position="23"/>
        <end position="25"/>
    </location>
</feature>
<feature type="strand" evidence="17">
    <location>
        <begin position="36"/>
        <end position="41"/>
    </location>
</feature>
<feature type="strand" evidence="16">
    <location>
        <begin position="44"/>
        <end position="46"/>
    </location>
</feature>
<feature type="helix" evidence="17">
    <location>
        <begin position="47"/>
        <end position="58"/>
    </location>
</feature>
<feature type="strand" evidence="17">
    <location>
        <begin position="60"/>
        <end position="63"/>
    </location>
</feature>
<feature type="strand" evidence="17">
    <location>
        <begin position="65"/>
        <end position="70"/>
    </location>
</feature>
<feature type="strand" evidence="16">
    <location>
        <begin position="77"/>
        <end position="79"/>
    </location>
</feature>
<feature type="helix" evidence="17">
    <location>
        <begin position="83"/>
        <end position="88"/>
    </location>
</feature>
<feature type="helix" evidence="17">
    <location>
        <begin position="92"/>
        <end position="95"/>
    </location>
</feature>
<feature type="strand" evidence="17">
    <location>
        <begin position="100"/>
        <end position="105"/>
    </location>
</feature>
<feature type="helix" evidence="17">
    <location>
        <begin position="115"/>
        <end position="117"/>
    </location>
</feature>
<feature type="helix" evidence="17">
    <location>
        <begin position="121"/>
        <end position="134"/>
    </location>
</feature>
<feature type="strand" evidence="17">
    <location>
        <begin position="135"/>
        <end position="141"/>
    </location>
</feature>
<feature type="helix" evidence="17">
    <location>
        <begin position="143"/>
        <end position="153"/>
    </location>
</feature>
<feature type="strand" evidence="17">
    <location>
        <begin position="159"/>
        <end position="173"/>
    </location>
</feature>
<feature type="turn" evidence="17">
    <location>
        <begin position="179"/>
        <end position="182"/>
    </location>
</feature>
<feature type="strand" evidence="17">
    <location>
        <begin position="185"/>
        <end position="195"/>
    </location>
</feature>
<feature type="helix" evidence="17">
    <location>
        <begin position="199"/>
        <end position="206"/>
    </location>
</feature>
<feature type="strand" evidence="17">
    <location>
        <begin position="209"/>
        <end position="214"/>
    </location>
</feature>
<feature type="strand" evidence="17">
    <location>
        <begin position="217"/>
        <end position="223"/>
    </location>
</feature>
<feature type="strand" evidence="17">
    <location>
        <begin position="227"/>
        <end position="232"/>
    </location>
</feature>
<feature type="helix" evidence="17">
    <location>
        <begin position="242"/>
        <end position="252"/>
    </location>
</feature>
<feature type="helix" evidence="17">
    <location>
        <begin position="265"/>
        <end position="267"/>
    </location>
</feature>
<feature type="helix" evidence="17">
    <location>
        <begin position="278"/>
        <end position="291"/>
    </location>
</feature>
<feature type="turn" evidence="17">
    <location>
        <begin position="292"/>
        <end position="294"/>
    </location>
</feature>
<proteinExistence type="evidence at protein level"/>
<reference key="1">
    <citation type="journal article" date="1989" name="Nucleic Acids Res.">
        <title>Nucleotide sequence of the metA gene encoding homoserine trans-succinylase in Escherichia coli.</title>
        <authorList>
            <person name="Cozzone A.J."/>
        </authorList>
    </citation>
    <scope>NUCLEOTIDE SEQUENCE [GENOMIC DNA]</scope>
    <source>
        <strain>K12</strain>
    </source>
</reference>
<reference key="2">
    <citation type="journal article" date="1999" name="Biochemistry">
        <title>Enzyme-catalyzed acylation of homoserine: mechanistic characterization of the Escherichia coli metA-encoded homoserine transsuccinylase.</title>
        <authorList>
            <person name="Born T.L."/>
            <person name="Blanchard J.S."/>
        </authorList>
    </citation>
    <scope>NUCLEOTIDE SEQUENCE [GENOMIC DNA]</scope>
    <scope>PROTEIN SEQUENCE OF 2-21</scope>
    <scope>FUNCTION</scope>
    <scope>CATALYTIC ACTIVITY</scope>
    <scope>REACTION MECHANISM</scope>
    <scope>ACTIVITY REGULATION</scope>
    <scope>BIOPHYSICOCHEMICAL PROPERTIES</scope>
    <scope>PATHWAY</scope>
    <scope>SUBUNIT</scope>
    <scope>ACTIVE SITE</scope>
</reference>
<reference key="3">
    <citation type="journal article" date="1993" name="Nucleic Acids Res.">
        <title>Analysis of the Escherichia coli genome. IV. DNA sequence of the region from 89.2 to 92.8 minutes.</title>
        <authorList>
            <person name="Blattner F.R."/>
            <person name="Burland V.D."/>
            <person name="Plunkett G. III"/>
            <person name="Sofia H.J."/>
            <person name="Daniels D.L."/>
        </authorList>
    </citation>
    <scope>NUCLEOTIDE SEQUENCE [LARGE SCALE GENOMIC DNA]</scope>
    <source>
        <strain>K12 / MG1655 / ATCC 47076</strain>
    </source>
</reference>
<reference key="4">
    <citation type="journal article" date="1997" name="Science">
        <title>The complete genome sequence of Escherichia coli K-12.</title>
        <authorList>
            <person name="Blattner F.R."/>
            <person name="Plunkett G. III"/>
            <person name="Bloch C.A."/>
            <person name="Perna N.T."/>
            <person name="Burland V."/>
            <person name="Riley M."/>
            <person name="Collado-Vides J."/>
            <person name="Glasner J.D."/>
            <person name="Rode C.K."/>
            <person name="Mayhew G.F."/>
            <person name="Gregor J."/>
            <person name="Davis N.W."/>
            <person name="Kirkpatrick H.A."/>
            <person name="Goeden M.A."/>
            <person name="Rose D.J."/>
            <person name="Mau B."/>
            <person name="Shao Y."/>
        </authorList>
    </citation>
    <scope>NUCLEOTIDE SEQUENCE [LARGE SCALE GENOMIC DNA]</scope>
    <source>
        <strain>K12 / MG1655 / ATCC 47076</strain>
    </source>
</reference>
<reference key="5">
    <citation type="journal article" date="2006" name="Mol. Syst. Biol.">
        <title>Highly accurate genome sequences of Escherichia coli K-12 strains MG1655 and W3110.</title>
        <authorList>
            <person name="Hayashi K."/>
            <person name="Morooka N."/>
            <person name="Yamamoto Y."/>
            <person name="Fujita K."/>
            <person name="Isono K."/>
            <person name="Choi S."/>
            <person name="Ohtsubo E."/>
            <person name="Baba T."/>
            <person name="Wanner B.L."/>
            <person name="Mori H."/>
            <person name="Horiuchi T."/>
        </authorList>
    </citation>
    <scope>NUCLEOTIDE SEQUENCE [LARGE SCALE GENOMIC DNA]</scope>
    <source>
        <strain>K12 / W3110 / ATCC 27325 / DSM 5911</strain>
    </source>
</reference>
<reference key="6">
    <citation type="journal article" date="1984" name="J. Bacteriol.">
        <title>Regulatory region of the metA gene of Escherichia coli K-12.</title>
        <authorList>
            <person name="Michaeli S."/>
            <person name="Mevarech M."/>
            <person name="Ron E.Z."/>
        </authorList>
    </citation>
    <scope>NUCLEOTIDE SEQUENCE [GENOMIC DNA] OF 1-70</scope>
    <scope>INDUCTION</scope>
    <source>
        <strain>K12</strain>
    </source>
</reference>
<reference key="7">
    <citation type="journal article" date="1988" name="Nucleic Acids Res.">
        <title>Nucleotide sequence of the aceB gene encoding malate synthase A in Escherichia coli.</title>
        <authorList>
            <person name="Byrne C.R."/>
            <person name="Stokes H.W."/>
            <person name="Ward K.A."/>
        </authorList>
    </citation>
    <scope>NUCLEOTIDE SEQUENCE [GENOMIC DNA] OF 207-309</scope>
    <source>
        <strain>K12</strain>
    </source>
</reference>
<reference key="8">
    <citation type="journal article" date="2004" name="FEBS Lett.">
        <title>Probing the active site of homoserine trans-succinylase.</title>
        <authorList>
            <person name="Rosen R."/>
            <person name="Becher D."/>
            <person name="Buettner K."/>
            <person name="Biran D."/>
            <person name="Hecker M."/>
            <person name="Ron E.Z."/>
        </authorList>
    </citation>
    <scope>MUTAGENESIS OF 46-LYS-LYS-47</scope>
    <source>
        <strain>K12 / MG1655 / ATCC 47076</strain>
    </source>
</reference>
<reference key="9">
    <citation type="journal article" date="2007" name="Arch. Biochem. Biophys.">
        <title>Assessing the roles of essential functional groups in the mechanism of homoserine succinyltransferase.</title>
        <authorList>
            <person name="Coe D.M."/>
            <person name="Viola R.E."/>
        </authorList>
    </citation>
    <scope>FUNCTION</scope>
    <scope>CATALYTIC ACTIVITY</scope>
    <scope>REACTION MECHANISM</scope>
    <scope>BIOPHYSICOCHEMICAL PROPERTIES</scope>
    <scope>MUTAGENESIS OF LYS-46; LYS-47; CYS-142; LYS-157; ARG-193; HIS-235; GLU-237; TYR-238; GLU-246 AND ARG-249</scope>
    <scope>ACTIVE SITE</scope>
</reference>
<reference key="10">
    <citation type="journal article" date="2007" name="Biochemistry">
        <title>Identification of catalytic cysteine, histidine, and lysine residues in Escherichia coli homoserine transsuccinylase.</title>
        <authorList>
            <person name="Ziegler K."/>
            <person name="Noble S.M."/>
            <person name="Mutumanje E."/>
            <person name="Bishop B."/>
            <person name="Huddler D.P."/>
            <person name="Born T.L."/>
        </authorList>
    </citation>
    <scope>FUNCTION</scope>
    <scope>CATALYTIC ACTIVITY</scope>
    <scope>REACTION MECHANISM</scope>
    <scope>BIOPHYSICOCHEMICAL PROPERTIES</scope>
    <scope>MUTAGENESIS OF LYS-46; LYS-47; CYS-90; CYS-142 AND HIS-235</scope>
    <scope>ACTIVE SITE</scope>
</reference>
<reference key="11">
    <citation type="journal article" date="2017" name="Nat. Chem. Biol.">
        <title>Parallel evolution of non-homologous isofunctional enzymes in methionine biosynthesis.</title>
        <authorList>
            <person name="Bastard K."/>
            <person name="Perret A."/>
            <person name="Mariage A."/>
            <person name="Bessonnet T."/>
            <person name="Pinet-Turpault A."/>
            <person name="Petit J.L."/>
            <person name="Darii E."/>
            <person name="Bazire P."/>
            <person name="Vergne-Vaxelaire C."/>
            <person name="Brewee C."/>
            <person name="Debard A."/>
            <person name="Pellouin V."/>
            <person name="Besnard-Gonnet M."/>
            <person name="Artiguenave F."/>
            <person name="Medigue C."/>
            <person name="Vallenet D."/>
            <person name="Danchin A."/>
            <person name="Zaparucha A."/>
            <person name="Weissenbach J."/>
            <person name="Salanoubat M."/>
            <person name="de Berardinis V."/>
        </authorList>
    </citation>
    <scope>FUNCTION</scope>
    <scope>CATALYTIC ACTIVITY</scope>
</reference>
<keyword id="KW-0002">3D-structure</keyword>
<keyword id="KW-0012">Acyltransferase</keyword>
<keyword id="KW-0028">Amino-acid biosynthesis</keyword>
<keyword id="KW-0963">Cytoplasm</keyword>
<keyword id="KW-0903">Direct protein sequencing</keyword>
<keyword id="KW-0486">Methionine biosynthesis</keyword>
<keyword id="KW-1185">Reference proteome</keyword>
<keyword id="KW-0808">Transferase</keyword>
<evidence type="ECO:0000255" key="1">
    <source>
        <dbReference type="HAMAP-Rule" id="MF_00295"/>
    </source>
</evidence>
<evidence type="ECO:0000269" key="2">
    <source>
    </source>
</evidence>
<evidence type="ECO:0000269" key="3">
    <source>
    </source>
</evidence>
<evidence type="ECO:0000269" key="4">
    <source>
    </source>
</evidence>
<evidence type="ECO:0000269" key="5">
    <source>
    </source>
</evidence>
<evidence type="ECO:0000269" key="6">
    <source>
    </source>
</evidence>
<evidence type="ECO:0000269" key="7">
    <source>
    </source>
</evidence>
<evidence type="ECO:0000303" key="8">
    <source>
    </source>
</evidence>
<evidence type="ECO:0000303" key="9">
    <source>
    </source>
</evidence>
<evidence type="ECO:0000303" key="10">
    <source>
    </source>
</evidence>
<evidence type="ECO:0000303" key="11">
    <source>
    </source>
</evidence>
<evidence type="ECO:0000305" key="12"/>
<evidence type="ECO:0000305" key="13">
    <source>
    </source>
</evidence>
<evidence type="ECO:0000305" key="14">
    <source>
    </source>
</evidence>
<evidence type="ECO:0000305" key="15">
    <source>
    </source>
</evidence>
<evidence type="ECO:0007829" key="16">
    <source>
        <dbReference type="PDB" id="6MTG"/>
    </source>
</evidence>
<evidence type="ECO:0007829" key="17">
    <source>
        <dbReference type="PDB" id="7CBE"/>
    </source>
</evidence>
<protein>
    <recommendedName>
        <fullName evidence="1 9">Homoserine O-succinyltransferase</fullName>
        <shortName evidence="1 9">HST</shortName>
        <ecNumber evidence="2 4 5 6">2.3.1.46</ecNumber>
    </recommendedName>
    <alternativeName>
        <fullName evidence="1 8">Homoserine transsuccinylase</fullName>
        <shortName evidence="1 8">HTS</shortName>
    </alternativeName>
</protein>
<sequence>MPIRVPDELPAVNFLREENVFVMTTSRASGQEIRPLKVLILNLMPKKIETENQFLRLLSNSPLQVDIQLLRIDSRESRNTPAEHLNNFYCNFEDIQDQNFDGLIVTGAPLGLVEFNDVAYWPQIKQVLEWSKDHVTSTLFVCWAVQAALNILYGIPKQTRTEKLSGVYEHHILHPHALLTRGFDDSFLAPHSRYADFPAALIRDYTDLEILAETEEGDAYLFASKDKRIAFVTGHPEYDAQTLAQEFFRDVEAGLDPDVPYNYFPHNDPQNTPRASWRSHGNLLFTNWLNYYVYQITPYDLRHMNPTLD</sequence>
<accession>P07623</accession>
<accession>Q2M6U1</accession>
<gene>
    <name evidence="1 10" type="primary">metAS</name>
    <name evidence="11" type="synonym">metA</name>
    <name type="ordered locus">b4013</name>
    <name type="ordered locus">JW3973</name>
</gene>
<organism>
    <name type="scientific">Escherichia coli (strain K12)</name>
    <dbReference type="NCBI Taxonomy" id="83333"/>
    <lineage>
        <taxon>Bacteria</taxon>
        <taxon>Pseudomonadati</taxon>
        <taxon>Pseudomonadota</taxon>
        <taxon>Gammaproteobacteria</taxon>
        <taxon>Enterobacterales</taxon>
        <taxon>Enterobacteriaceae</taxon>
        <taxon>Escherichia</taxon>
    </lineage>
</organism>